<organism>
    <name type="scientific">Mycolicibacterium smegmatis</name>
    <name type="common">Mycobacterium smegmatis</name>
    <dbReference type="NCBI Taxonomy" id="1772"/>
    <lineage>
        <taxon>Bacteria</taxon>
        <taxon>Bacillati</taxon>
        <taxon>Actinomycetota</taxon>
        <taxon>Actinomycetes</taxon>
        <taxon>Mycobacteriales</taxon>
        <taxon>Mycobacteriaceae</taxon>
        <taxon>Mycolicibacterium</taxon>
    </lineage>
</organism>
<reference key="1">
    <citation type="journal article" date="1997" name="J. Bacteriol.">
        <title>Interruption of the phosphoglucose isomerase gene results in glucose auxotrophy in Mycobacterium smegmatis.</title>
        <authorList>
            <person name="Tuckman D."/>
            <person name="Donnelly R.J."/>
            <person name="Zhao F.X."/>
            <person name="Jacobs W.R. Jr."/>
            <person name="Connell N.D."/>
        </authorList>
    </citation>
    <scope>NUCLEOTIDE SEQUENCE [GENOMIC DNA]</scope>
    <source>
        <strain>mc(2)743</strain>
    </source>
</reference>
<keyword id="KW-0963">Cytoplasm</keyword>
<keyword id="KW-0312">Gluconeogenesis</keyword>
<keyword id="KW-0324">Glycolysis</keyword>
<keyword id="KW-0413">Isomerase</keyword>
<comment type="function">
    <text evidence="1">Catalyzes the reversible isomerization of glucose-6-phosphate to fructose-6-phosphate.</text>
</comment>
<comment type="catalytic activity">
    <reaction evidence="1">
        <text>alpha-D-glucose 6-phosphate = beta-D-fructose 6-phosphate</text>
        <dbReference type="Rhea" id="RHEA:11816"/>
        <dbReference type="ChEBI" id="CHEBI:57634"/>
        <dbReference type="ChEBI" id="CHEBI:58225"/>
        <dbReference type="EC" id="5.3.1.9"/>
    </reaction>
</comment>
<comment type="pathway">
    <text evidence="1">Carbohydrate biosynthesis; gluconeogenesis.</text>
</comment>
<comment type="pathway">
    <text evidence="1">Carbohydrate degradation; glycolysis; D-glyceraldehyde 3-phosphate and glycerone phosphate from D-glucose: step 2/4.</text>
</comment>
<comment type="subcellular location">
    <subcellularLocation>
        <location evidence="1">Cytoplasm</location>
    </subcellularLocation>
</comment>
<comment type="similarity">
    <text evidence="1 2">Belongs to the GPI family.</text>
</comment>
<comment type="sequence caution" evidence="2">
    <conflict type="frameshift">
        <sequence resource="EMBL-CDS" id="AAB52545"/>
    </conflict>
</comment>
<sequence length="549" mass="59673">MSADITETPAWQALSDHHAEIGDRHLTELFADDPARGTELALTVGDLYIDYSKHRVTRRTLDLLVDLARAAGLEERRDAMFAGEHINTSEDRAVLHTALRLPRDAKLVVDGQDVVADVHDVLDRMGDFTDRLRSGEWTGATGERITTVVNIGIGGSDLGPVMVYDALRHYADAGISARFVSNVDPADLVAKLDGLEPAKTLFIVASKTFSTLETLTNATAARRWLTDALGDAAVAKHSSRCPPTRSWSTKFGINTDNMFGFWDWVGGRYSVDSAIGLSVMAVIGKERFAEFLAGFHIVDEHFRTAPLHQNAPALLGLIGLWYSNFFGAQSRAVLPYSNDLSRFAAYLQQLTMESNGKSVRADGTPVSTDTGEIFWGEPGTNGQHAFYQLLHQGTRLVPADFIGFSQPTDDLPTADGTGSMHDLLMSNFFAQTQVLAFGKTADAIASEGTPADVVPHKVMPGNRPTTSILATKLTPSVVGQLIALYEHQVFTEGVIWGIDSFDQWGVELGKTQAKALLPVLTGDKSPAAQSDTSTDALVRRYRTERGRPA</sequence>
<name>G6PI_MYCSM</name>
<gene>
    <name evidence="1" type="primary">pgi</name>
</gene>
<proteinExistence type="inferred from homology"/>
<feature type="chain" id="PRO_0000180676" description="Glucose-6-phosphate isomerase">
    <location>
        <begin position="1"/>
        <end position="549"/>
    </location>
</feature>
<feature type="active site" description="Proton donor" evidence="1">
    <location>
        <position position="353"/>
    </location>
</feature>
<feature type="active site" evidence="1">
    <location>
        <position position="384"/>
    </location>
</feature>
<feature type="active site" evidence="1">
    <location>
        <position position="510"/>
    </location>
</feature>
<evidence type="ECO:0000255" key="1">
    <source>
        <dbReference type="HAMAP-Rule" id="MF_00473"/>
    </source>
</evidence>
<evidence type="ECO:0000305" key="2"/>
<accession>P96803</accession>
<protein>
    <recommendedName>
        <fullName evidence="1">Glucose-6-phosphate isomerase</fullName>
        <shortName evidence="1">GPI</shortName>
        <ecNumber evidence="1">5.3.1.9</ecNumber>
    </recommendedName>
    <alternativeName>
        <fullName evidence="1">Phosphoglucose isomerase</fullName>
        <shortName evidence="1">PGI</shortName>
    </alternativeName>
    <alternativeName>
        <fullName evidence="1">Phosphohexose isomerase</fullName>
        <shortName evidence="1">PHI</shortName>
    </alternativeName>
</protein>
<dbReference type="EC" id="5.3.1.9" evidence="1"/>
<dbReference type="EMBL" id="U88433">
    <property type="protein sequence ID" value="AAB52545.1"/>
    <property type="status" value="ALT_FRAME"/>
    <property type="molecule type" value="Genomic_DNA"/>
</dbReference>
<dbReference type="SMR" id="P96803"/>
<dbReference type="UniPathway" id="UPA00109">
    <property type="reaction ID" value="UER00181"/>
</dbReference>
<dbReference type="UniPathway" id="UPA00138"/>
<dbReference type="GO" id="GO:0005829">
    <property type="term" value="C:cytosol"/>
    <property type="evidence" value="ECO:0007669"/>
    <property type="project" value="TreeGrafter"/>
</dbReference>
<dbReference type="GO" id="GO:0097367">
    <property type="term" value="F:carbohydrate derivative binding"/>
    <property type="evidence" value="ECO:0007669"/>
    <property type="project" value="InterPro"/>
</dbReference>
<dbReference type="GO" id="GO:0004347">
    <property type="term" value="F:glucose-6-phosphate isomerase activity"/>
    <property type="evidence" value="ECO:0007669"/>
    <property type="project" value="UniProtKB-UniRule"/>
</dbReference>
<dbReference type="GO" id="GO:0048029">
    <property type="term" value="F:monosaccharide binding"/>
    <property type="evidence" value="ECO:0007669"/>
    <property type="project" value="TreeGrafter"/>
</dbReference>
<dbReference type="GO" id="GO:0006094">
    <property type="term" value="P:gluconeogenesis"/>
    <property type="evidence" value="ECO:0007669"/>
    <property type="project" value="UniProtKB-UniRule"/>
</dbReference>
<dbReference type="GO" id="GO:0051156">
    <property type="term" value="P:glucose 6-phosphate metabolic process"/>
    <property type="evidence" value="ECO:0007669"/>
    <property type="project" value="TreeGrafter"/>
</dbReference>
<dbReference type="GO" id="GO:0006096">
    <property type="term" value="P:glycolytic process"/>
    <property type="evidence" value="ECO:0007669"/>
    <property type="project" value="UniProtKB-UniRule"/>
</dbReference>
<dbReference type="CDD" id="cd05015">
    <property type="entry name" value="SIS_PGI_1"/>
    <property type="match status" value="1"/>
</dbReference>
<dbReference type="CDD" id="cd05016">
    <property type="entry name" value="SIS_PGI_2"/>
    <property type="match status" value="1"/>
</dbReference>
<dbReference type="FunFam" id="3.40.50.10490:FF:000018">
    <property type="entry name" value="Glucose-6-phosphate isomerase"/>
    <property type="match status" value="1"/>
</dbReference>
<dbReference type="Gene3D" id="1.10.1390.10">
    <property type="match status" value="1"/>
</dbReference>
<dbReference type="Gene3D" id="3.40.50.10490">
    <property type="entry name" value="Glucose-6-phosphate isomerase like protein, domain 1"/>
    <property type="match status" value="2"/>
</dbReference>
<dbReference type="HAMAP" id="MF_00473">
    <property type="entry name" value="G6P_isomerase"/>
    <property type="match status" value="1"/>
</dbReference>
<dbReference type="InterPro" id="IPR001672">
    <property type="entry name" value="G6P_Isomerase"/>
</dbReference>
<dbReference type="InterPro" id="IPR023096">
    <property type="entry name" value="G6P_Isomerase_C"/>
</dbReference>
<dbReference type="InterPro" id="IPR018189">
    <property type="entry name" value="Phosphoglucose_isomerase_CS"/>
</dbReference>
<dbReference type="InterPro" id="IPR046348">
    <property type="entry name" value="SIS_dom_sf"/>
</dbReference>
<dbReference type="InterPro" id="IPR035476">
    <property type="entry name" value="SIS_PGI_1"/>
</dbReference>
<dbReference type="InterPro" id="IPR035482">
    <property type="entry name" value="SIS_PGI_2"/>
</dbReference>
<dbReference type="NCBIfam" id="NF001211">
    <property type="entry name" value="PRK00179.1"/>
    <property type="match status" value="1"/>
</dbReference>
<dbReference type="PANTHER" id="PTHR11469">
    <property type="entry name" value="GLUCOSE-6-PHOSPHATE ISOMERASE"/>
    <property type="match status" value="1"/>
</dbReference>
<dbReference type="PANTHER" id="PTHR11469:SF1">
    <property type="entry name" value="GLUCOSE-6-PHOSPHATE ISOMERASE"/>
    <property type="match status" value="1"/>
</dbReference>
<dbReference type="Pfam" id="PF00342">
    <property type="entry name" value="PGI"/>
    <property type="match status" value="1"/>
</dbReference>
<dbReference type="PRINTS" id="PR00662">
    <property type="entry name" value="G6PISOMERASE"/>
</dbReference>
<dbReference type="SUPFAM" id="SSF53697">
    <property type="entry name" value="SIS domain"/>
    <property type="match status" value="1"/>
</dbReference>
<dbReference type="PROSITE" id="PS00765">
    <property type="entry name" value="P_GLUCOSE_ISOMERASE_1"/>
    <property type="match status" value="1"/>
</dbReference>
<dbReference type="PROSITE" id="PS00174">
    <property type="entry name" value="P_GLUCOSE_ISOMERASE_2"/>
    <property type="match status" value="1"/>
</dbReference>
<dbReference type="PROSITE" id="PS51463">
    <property type="entry name" value="P_GLUCOSE_ISOMERASE_3"/>
    <property type="match status" value="1"/>
</dbReference>